<gene>
    <name type="ordered locus">A2cp1_2727</name>
</gene>
<sequence>MRTLGVDLGRVRIGLAVADEILRTARAVTTVVRRTEAEDLAAIAEVARDYEVTRAVVGLPLNMDGTEGPSARLARGFAPRLEAALGVPVELFDERLSSFEAESRLRARGLSAREQRGQVDAEAAAVILQGWLDRRAP</sequence>
<keyword id="KW-0963">Cytoplasm</keyword>
<keyword id="KW-0378">Hydrolase</keyword>
<keyword id="KW-0540">Nuclease</keyword>
<keyword id="KW-0690">Ribosome biogenesis</keyword>
<dbReference type="EC" id="3.1.-.-" evidence="1"/>
<dbReference type="EMBL" id="CP001359">
    <property type="protein sequence ID" value="ACL66064.1"/>
    <property type="molecule type" value="Genomic_DNA"/>
</dbReference>
<dbReference type="RefSeq" id="WP_012633829.1">
    <property type="nucleotide sequence ID" value="NC_011891.1"/>
</dbReference>
<dbReference type="SMR" id="B8JDZ9"/>
<dbReference type="KEGG" id="acp:A2cp1_2727"/>
<dbReference type="HOGENOM" id="CLU_098240_2_0_7"/>
<dbReference type="Proteomes" id="UP000007089">
    <property type="component" value="Chromosome"/>
</dbReference>
<dbReference type="GO" id="GO:0005829">
    <property type="term" value="C:cytosol"/>
    <property type="evidence" value="ECO:0007669"/>
    <property type="project" value="TreeGrafter"/>
</dbReference>
<dbReference type="GO" id="GO:0004518">
    <property type="term" value="F:nuclease activity"/>
    <property type="evidence" value="ECO:0007669"/>
    <property type="project" value="UniProtKB-KW"/>
</dbReference>
<dbReference type="GO" id="GO:0000967">
    <property type="term" value="P:rRNA 5'-end processing"/>
    <property type="evidence" value="ECO:0007669"/>
    <property type="project" value="UniProtKB-UniRule"/>
</dbReference>
<dbReference type="CDD" id="cd16964">
    <property type="entry name" value="YqgF"/>
    <property type="match status" value="1"/>
</dbReference>
<dbReference type="Gene3D" id="3.30.420.140">
    <property type="entry name" value="YqgF/RNase H-like domain"/>
    <property type="match status" value="1"/>
</dbReference>
<dbReference type="HAMAP" id="MF_00651">
    <property type="entry name" value="Nuclease_YqgF"/>
    <property type="match status" value="1"/>
</dbReference>
<dbReference type="InterPro" id="IPR012337">
    <property type="entry name" value="RNaseH-like_sf"/>
</dbReference>
<dbReference type="InterPro" id="IPR005227">
    <property type="entry name" value="YqgF"/>
</dbReference>
<dbReference type="InterPro" id="IPR006641">
    <property type="entry name" value="YqgF/RNaseH-like_dom"/>
</dbReference>
<dbReference type="InterPro" id="IPR037027">
    <property type="entry name" value="YqgF/RNaseH-like_dom_sf"/>
</dbReference>
<dbReference type="NCBIfam" id="TIGR00250">
    <property type="entry name" value="RNAse_H_YqgF"/>
    <property type="match status" value="1"/>
</dbReference>
<dbReference type="PANTHER" id="PTHR33317">
    <property type="entry name" value="POLYNUCLEOTIDYL TRANSFERASE, RIBONUCLEASE H-LIKE SUPERFAMILY PROTEIN"/>
    <property type="match status" value="1"/>
</dbReference>
<dbReference type="PANTHER" id="PTHR33317:SF4">
    <property type="entry name" value="POLYNUCLEOTIDYL TRANSFERASE, RIBONUCLEASE H-LIKE SUPERFAMILY PROTEIN"/>
    <property type="match status" value="1"/>
</dbReference>
<dbReference type="Pfam" id="PF03652">
    <property type="entry name" value="RuvX"/>
    <property type="match status" value="1"/>
</dbReference>
<dbReference type="SMART" id="SM00732">
    <property type="entry name" value="YqgFc"/>
    <property type="match status" value="1"/>
</dbReference>
<dbReference type="SUPFAM" id="SSF53098">
    <property type="entry name" value="Ribonuclease H-like"/>
    <property type="match status" value="1"/>
</dbReference>
<comment type="function">
    <text evidence="1">Could be a nuclease involved in processing of the 5'-end of pre-16S rRNA.</text>
</comment>
<comment type="subcellular location">
    <subcellularLocation>
        <location evidence="1">Cytoplasm</location>
    </subcellularLocation>
</comment>
<comment type="similarity">
    <text evidence="1">Belongs to the YqgF nuclease family.</text>
</comment>
<feature type="chain" id="PRO_1000147457" description="Putative pre-16S rRNA nuclease">
    <location>
        <begin position="1"/>
        <end position="137"/>
    </location>
</feature>
<accession>B8JDZ9</accession>
<organism>
    <name type="scientific">Anaeromyxobacter dehalogenans (strain 2CP-1 / ATCC BAA-258)</name>
    <dbReference type="NCBI Taxonomy" id="455488"/>
    <lineage>
        <taxon>Bacteria</taxon>
        <taxon>Pseudomonadati</taxon>
        <taxon>Myxococcota</taxon>
        <taxon>Myxococcia</taxon>
        <taxon>Myxococcales</taxon>
        <taxon>Cystobacterineae</taxon>
        <taxon>Anaeromyxobacteraceae</taxon>
        <taxon>Anaeromyxobacter</taxon>
    </lineage>
</organism>
<proteinExistence type="inferred from homology"/>
<evidence type="ECO:0000255" key="1">
    <source>
        <dbReference type="HAMAP-Rule" id="MF_00651"/>
    </source>
</evidence>
<name>YQGF_ANAD2</name>
<reference key="1">
    <citation type="submission" date="2009-01" db="EMBL/GenBank/DDBJ databases">
        <title>Complete sequence of Anaeromyxobacter dehalogenans 2CP-1.</title>
        <authorList>
            <person name="Lucas S."/>
            <person name="Copeland A."/>
            <person name="Lapidus A."/>
            <person name="Glavina del Rio T."/>
            <person name="Dalin E."/>
            <person name="Tice H."/>
            <person name="Bruce D."/>
            <person name="Goodwin L."/>
            <person name="Pitluck S."/>
            <person name="Saunders E."/>
            <person name="Brettin T."/>
            <person name="Detter J.C."/>
            <person name="Han C."/>
            <person name="Larimer F."/>
            <person name="Land M."/>
            <person name="Hauser L."/>
            <person name="Kyrpides N."/>
            <person name="Ovchinnikova G."/>
            <person name="Beliaev A.S."/>
            <person name="Richardson P."/>
        </authorList>
    </citation>
    <scope>NUCLEOTIDE SEQUENCE [LARGE SCALE GENOMIC DNA]</scope>
    <source>
        <strain>2CP-1 / ATCC BAA-258</strain>
    </source>
</reference>
<protein>
    <recommendedName>
        <fullName evidence="1">Putative pre-16S rRNA nuclease</fullName>
        <ecNumber evidence="1">3.1.-.-</ecNumber>
    </recommendedName>
</protein>